<reference key="1">
    <citation type="journal article" date="2009" name="Appl. Environ. Microbiol.">
        <title>Novel features of the polysaccharide-digesting gliding bacterium Flavobacterium johnsoniae as revealed by genome sequence analysis.</title>
        <authorList>
            <person name="McBride M.J."/>
            <person name="Xie G."/>
            <person name="Martens E.C."/>
            <person name="Lapidus A."/>
            <person name="Henrissat B."/>
            <person name="Rhodes R.G."/>
            <person name="Goltsman E."/>
            <person name="Wang W."/>
            <person name="Xu J."/>
            <person name="Hunnicutt D.W."/>
            <person name="Staroscik A.M."/>
            <person name="Hoover T.R."/>
            <person name="Cheng Y.Q."/>
            <person name="Stein J.L."/>
        </authorList>
    </citation>
    <scope>NUCLEOTIDE SEQUENCE [LARGE SCALE GENOMIC DNA]</scope>
    <source>
        <strain>ATCC 17061 / DSM 2064 / JCM 8514 / BCRC 14874 / CCUG 350202 / NBRC 14942 / NCIMB 11054 / UW101</strain>
    </source>
</reference>
<sequence length="272" mass="29639">MSTAKKDYKRITTKSLIEMKSNGEKISMLTAYDYTMAKIVDTAGVDVILVGDSASNVMAGHETTLPITLDQMIYHASSVVRAVERGLVVVDLPFGSYQSDPKEALRSAIRIMKESGAHAVKLEGGKEIKESIKKILNAGIPVMGHLGLTPQSIYKFGTYSVRAKEEQEAEKLIEDAQMLEKVGCFGVVLEKIPADLAKKVADSISIPVIGIGAGGAVDGQVLVIHDMLGMNNEFSPRFLRRYLNLYEEMTKAIGQYAADVKSSDFPNASEQY</sequence>
<dbReference type="EC" id="2.1.2.11" evidence="1"/>
<dbReference type="EMBL" id="CP000685">
    <property type="protein sequence ID" value="ABQ07710.1"/>
    <property type="molecule type" value="Genomic_DNA"/>
</dbReference>
<dbReference type="RefSeq" id="WP_012026676.1">
    <property type="nucleotide sequence ID" value="NC_009441.1"/>
</dbReference>
<dbReference type="SMR" id="A5FAQ5"/>
<dbReference type="STRING" id="376686.Fjoh_4711"/>
<dbReference type="KEGG" id="fjo:Fjoh_4711"/>
<dbReference type="eggNOG" id="COG0413">
    <property type="taxonomic scope" value="Bacteria"/>
</dbReference>
<dbReference type="HOGENOM" id="CLU_036645_1_0_10"/>
<dbReference type="OrthoDB" id="9781789at2"/>
<dbReference type="UniPathway" id="UPA00028">
    <property type="reaction ID" value="UER00003"/>
</dbReference>
<dbReference type="Proteomes" id="UP000006694">
    <property type="component" value="Chromosome"/>
</dbReference>
<dbReference type="GO" id="GO:0005737">
    <property type="term" value="C:cytoplasm"/>
    <property type="evidence" value="ECO:0007669"/>
    <property type="project" value="UniProtKB-SubCell"/>
</dbReference>
<dbReference type="GO" id="GO:0003864">
    <property type="term" value="F:3-methyl-2-oxobutanoate hydroxymethyltransferase activity"/>
    <property type="evidence" value="ECO:0007669"/>
    <property type="project" value="UniProtKB-UniRule"/>
</dbReference>
<dbReference type="GO" id="GO:0000287">
    <property type="term" value="F:magnesium ion binding"/>
    <property type="evidence" value="ECO:0007669"/>
    <property type="project" value="TreeGrafter"/>
</dbReference>
<dbReference type="GO" id="GO:0015940">
    <property type="term" value="P:pantothenate biosynthetic process"/>
    <property type="evidence" value="ECO:0007669"/>
    <property type="project" value="UniProtKB-UniRule"/>
</dbReference>
<dbReference type="CDD" id="cd06557">
    <property type="entry name" value="KPHMT-like"/>
    <property type="match status" value="1"/>
</dbReference>
<dbReference type="FunFam" id="3.20.20.60:FF:000017">
    <property type="entry name" value="3-methyl-2-oxobutanoate hydroxymethyltransferase"/>
    <property type="match status" value="1"/>
</dbReference>
<dbReference type="Gene3D" id="3.20.20.60">
    <property type="entry name" value="Phosphoenolpyruvate-binding domains"/>
    <property type="match status" value="1"/>
</dbReference>
<dbReference type="HAMAP" id="MF_00156">
    <property type="entry name" value="PanB"/>
    <property type="match status" value="1"/>
</dbReference>
<dbReference type="InterPro" id="IPR003700">
    <property type="entry name" value="Pantoate_hydroxy_MeTrfase"/>
</dbReference>
<dbReference type="InterPro" id="IPR015813">
    <property type="entry name" value="Pyrv/PenolPyrv_kinase-like_dom"/>
</dbReference>
<dbReference type="InterPro" id="IPR040442">
    <property type="entry name" value="Pyrv_kinase-like_dom_sf"/>
</dbReference>
<dbReference type="NCBIfam" id="TIGR00222">
    <property type="entry name" value="panB"/>
    <property type="match status" value="1"/>
</dbReference>
<dbReference type="NCBIfam" id="NF001452">
    <property type="entry name" value="PRK00311.1"/>
    <property type="match status" value="1"/>
</dbReference>
<dbReference type="PANTHER" id="PTHR20881">
    <property type="entry name" value="3-METHYL-2-OXOBUTANOATE HYDROXYMETHYLTRANSFERASE"/>
    <property type="match status" value="1"/>
</dbReference>
<dbReference type="PANTHER" id="PTHR20881:SF0">
    <property type="entry name" value="3-METHYL-2-OXOBUTANOATE HYDROXYMETHYLTRANSFERASE"/>
    <property type="match status" value="1"/>
</dbReference>
<dbReference type="Pfam" id="PF02548">
    <property type="entry name" value="Pantoate_transf"/>
    <property type="match status" value="1"/>
</dbReference>
<dbReference type="PIRSF" id="PIRSF000388">
    <property type="entry name" value="Pantoate_hydroxy_MeTrfase"/>
    <property type="match status" value="1"/>
</dbReference>
<dbReference type="SUPFAM" id="SSF51621">
    <property type="entry name" value="Phosphoenolpyruvate/pyruvate domain"/>
    <property type="match status" value="1"/>
</dbReference>
<proteinExistence type="inferred from homology"/>
<name>PANB_FLAJ1</name>
<protein>
    <recommendedName>
        <fullName evidence="1">3-methyl-2-oxobutanoate hydroxymethyltransferase</fullName>
        <ecNumber evidence="1">2.1.2.11</ecNumber>
    </recommendedName>
    <alternativeName>
        <fullName evidence="1">Ketopantoate hydroxymethyltransferase</fullName>
        <shortName evidence="1">KPHMT</shortName>
    </alternativeName>
</protein>
<keyword id="KW-0963">Cytoplasm</keyword>
<keyword id="KW-0460">Magnesium</keyword>
<keyword id="KW-0479">Metal-binding</keyword>
<keyword id="KW-0566">Pantothenate biosynthesis</keyword>
<keyword id="KW-0808">Transferase</keyword>
<feature type="chain" id="PRO_1000076826" description="3-methyl-2-oxobutanoate hydroxymethyltransferase">
    <location>
        <begin position="1"/>
        <end position="272"/>
    </location>
</feature>
<feature type="active site" description="Proton acceptor" evidence="1">
    <location>
        <position position="190"/>
    </location>
</feature>
<feature type="binding site" evidence="1">
    <location>
        <begin position="52"/>
        <end position="53"/>
    </location>
    <ligand>
        <name>3-methyl-2-oxobutanoate</name>
        <dbReference type="ChEBI" id="CHEBI:11851"/>
    </ligand>
</feature>
<feature type="binding site" evidence="1">
    <location>
        <position position="52"/>
    </location>
    <ligand>
        <name>Mg(2+)</name>
        <dbReference type="ChEBI" id="CHEBI:18420"/>
    </ligand>
</feature>
<feature type="binding site" evidence="1">
    <location>
        <position position="91"/>
    </location>
    <ligand>
        <name>3-methyl-2-oxobutanoate</name>
        <dbReference type="ChEBI" id="CHEBI:11851"/>
    </ligand>
</feature>
<feature type="binding site" evidence="1">
    <location>
        <position position="91"/>
    </location>
    <ligand>
        <name>Mg(2+)</name>
        <dbReference type="ChEBI" id="CHEBI:18420"/>
    </ligand>
</feature>
<feature type="binding site" evidence="1">
    <location>
        <position position="121"/>
    </location>
    <ligand>
        <name>3-methyl-2-oxobutanoate</name>
        <dbReference type="ChEBI" id="CHEBI:11851"/>
    </ligand>
</feature>
<feature type="binding site" evidence="1">
    <location>
        <position position="123"/>
    </location>
    <ligand>
        <name>Mg(2+)</name>
        <dbReference type="ChEBI" id="CHEBI:18420"/>
    </ligand>
</feature>
<evidence type="ECO:0000255" key="1">
    <source>
        <dbReference type="HAMAP-Rule" id="MF_00156"/>
    </source>
</evidence>
<gene>
    <name evidence="1" type="primary">panB</name>
    <name type="ordered locus">Fjoh_4711</name>
</gene>
<organism>
    <name type="scientific">Flavobacterium johnsoniae (strain ATCC 17061 / DSM 2064 / JCM 8514 / BCRC 14874 / CCUG 350202 / NBRC 14942 / NCIMB 11054 / UW101)</name>
    <name type="common">Cytophaga johnsonae</name>
    <dbReference type="NCBI Taxonomy" id="376686"/>
    <lineage>
        <taxon>Bacteria</taxon>
        <taxon>Pseudomonadati</taxon>
        <taxon>Bacteroidota</taxon>
        <taxon>Flavobacteriia</taxon>
        <taxon>Flavobacteriales</taxon>
        <taxon>Flavobacteriaceae</taxon>
        <taxon>Flavobacterium</taxon>
    </lineage>
</organism>
<comment type="function">
    <text evidence="1">Catalyzes the reversible reaction in which hydroxymethyl group from 5,10-methylenetetrahydrofolate is transferred onto alpha-ketoisovalerate to form ketopantoate.</text>
</comment>
<comment type="catalytic activity">
    <reaction evidence="1">
        <text>3-methyl-2-oxobutanoate + (6R)-5,10-methylene-5,6,7,8-tetrahydrofolate + H2O = 2-dehydropantoate + (6S)-5,6,7,8-tetrahydrofolate</text>
        <dbReference type="Rhea" id="RHEA:11824"/>
        <dbReference type="ChEBI" id="CHEBI:11561"/>
        <dbReference type="ChEBI" id="CHEBI:11851"/>
        <dbReference type="ChEBI" id="CHEBI:15377"/>
        <dbReference type="ChEBI" id="CHEBI:15636"/>
        <dbReference type="ChEBI" id="CHEBI:57453"/>
        <dbReference type="EC" id="2.1.2.11"/>
    </reaction>
</comment>
<comment type="cofactor">
    <cofactor evidence="1">
        <name>Mg(2+)</name>
        <dbReference type="ChEBI" id="CHEBI:18420"/>
    </cofactor>
    <text evidence="1">Binds 1 Mg(2+) ion per subunit.</text>
</comment>
<comment type="pathway">
    <text evidence="1">Cofactor biosynthesis; (R)-pantothenate biosynthesis; (R)-pantoate from 3-methyl-2-oxobutanoate: step 1/2.</text>
</comment>
<comment type="subunit">
    <text evidence="1">Homodecamer; pentamer of dimers.</text>
</comment>
<comment type="subcellular location">
    <subcellularLocation>
        <location evidence="1">Cytoplasm</location>
    </subcellularLocation>
</comment>
<comment type="similarity">
    <text evidence="1">Belongs to the PanB family.</text>
</comment>
<accession>A5FAQ5</accession>